<proteinExistence type="evidence at protein level"/>
<keyword id="KW-1003">Cell membrane</keyword>
<keyword id="KW-0966">Cell projection</keyword>
<keyword id="KW-0963">Cytoplasm</keyword>
<keyword id="KW-0206">Cytoskeleton</keyword>
<keyword id="KW-0472">Membrane</keyword>
<keyword id="KW-1185">Reference proteome</keyword>
<evidence type="ECO:0000250" key="1">
    <source>
        <dbReference type="UniProtKB" id="D3ZUE1"/>
    </source>
</evidence>
<evidence type="ECO:0000250" key="2">
    <source>
        <dbReference type="UniProtKB" id="Q8NHY3"/>
    </source>
</evidence>
<evidence type="ECO:0000255" key="3">
    <source>
        <dbReference type="PROSITE-ProRule" id="PRU00044"/>
    </source>
</evidence>
<evidence type="ECO:0000255" key="4">
    <source>
        <dbReference type="PROSITE-ProRule" id="PRU00792"/>
    </source>
</evidence>
<evidence type="ECO:0000256" key="5">
    <source>
        <dbReference type="SAM" id="MobiDB-lite"/>
    </source>
</evidence>
<evidence type="ECO:0000269" key="6">
    <source>
    </source>
</evidence>
<evidence type="ECO:0000269" key="7">
    <source>
    </source>
</evidence>
<evidence type="ECO:0000269" key="8">
    <source>
    </source>
</evidence>
<evidence type="ECO:0000305" key="9"/>
<reference key="1">
    <citation type="journal article" date="2009" name="PLoS Biol.">
        <title>Lineage-specific biology revealed by a finished genome assembly of the mouse.</title>
        <authorList>
            <person name="Church D.M."/>
            <person name="Goodstadt L."/>
            <person name="Hillier L.W."/>
            <person name="Zody M.C."/>
            <person name="Goldstein S."/>
            <person name="She X."/>
            <person name="Bult C.J."/>
            <person name="Agarwala R."/>
            <person name="Cherry J.L."/>
            <person name="DiCuccio M."/>
            <person name="Hlavina W."/>
            <person name="Kapustin Y."/>
            <person name="Meric P."/>
            <person name="Maglott D."/>
            <person name="Birtle Z."/>
            <person name="Marques A.C."/>
            <person name="Graves T."/>
            <person name="Zhou S."/>
            <person name="Teague B."/>
            <person name="Potamousis K."/>
            <person name="Churas C."/>
            <person name="Place M."/>
            <person name="Herschleb J."/>
            <person name="Runnheim R."/>
            <person name="Forrest D."/>
            <person name="Amos-Landgraf J."/>
            <person name="Schwartz D.C."/>
            <person name="Cheng Z."/>
            <person name="Lindblad-Toh K."/>
            <person name="Eichler E.E."/>
            <person name="Ponting C.P."/>
        </authorList>
    </citation>
    <scope>NUCLEOTIDE SEQUENCE [LARGE SCALE GENOMIC DNA]</scope>
    <source>
        <strain>C57BL/6J</strain>
    </source>
</reference>
<reference key="2">
    <citation type="journal article" date="2004" name="Genome Res.">
        <title>The status, quality, and expansion of the NIH full-length cDNA project: the Mammalian Gene Collection (MGC).</title>
        <authorList>
            <consortium name="The MGC Project Team"/>
        </authorList>
    </citation>
    <scope>NUCLEOTIDE SEQUENCE [LARGE SCALE MRNA]</scope>
    <source>
        <tissue>Brain</tissue>
        <tissue>Testis</tissue>
    </source>
</reference>
<reference key="3">
    <citation type="journal article" date="2013" name="Biochim. Biophys. Acta">
        <title>A novel Galphas-binding protein, Gas-2 like 2, facilitates the signaling of the A2A adenosine receptor.</title>
        <authorList>
            <person name="Wu Y.C."/>
            <person name="Lai H.L."/>
            <person name="Chang W.C."/>
            <person name="Lin J.T."/>
            <person name="Liu Y.J."/>
            <person name="Chern Y."/>
        </authorList>
    </citation>
    <scope>FUNCTION</scope>
    <scope>INTERACTION WITH ADORA2A; GNAS; GNAL; GNAQ AND GNA13</scope>
    <scope>SUBCELLULAR LOCATION</scope>
</reference>
<reference key="4">
    <citation type="journal article" date="2014" name="J. Cell Sci.">
        <title>GAS2-like proteins mediate communication between microtubules and actin through interactions with end-binding proteins.</title>
        <authorList>
            <person name="Stroud M.J."/>
            <person name="Nazgiewicz A."/>
            <person name="McKenzie E.A."/>
            <person name="Wang Y."/>
            <person name="Kammerer R.A."/>
            <person name="Ballestrem C."/>
        </authorList>
    </citation>
    <scope>INTERACTION WITH MAPRE1</scope>
</reference>
<reference key="5">
    <citation type="journal article" date="2019" name="Am. J. Hum. Genet.">
        <title>Lack of GAS2L2 Causes PCD by Impairing Cilia Orientation and Mucociliary Clearance.</title>
        <authorList>
            <person name="Bustamante-Marin X.M."/>
            <person name="Yin W.N."/>
            <person name="Sears P.R."/>
            <person name="Werner M.E."/>
            <person name="Brotslaw E.J."/>
            <person name="Mitchell B.J."/>
            <person name="Jania C.M."/>
            <person name="Zeman K.L."/>
            <person name="Rogers T.D."/>
            <person name="Herring L.E."/>
            <person name="Refabert L."/>
            <person name="Thomas L."/>
            <person name="Amselem S."/>
            <person name="Escudier E."/>
            <person name="Legendre M."/>
            <person name="Grubb B.R."/>
            <person name="Knowles M.R."/>
            <person name="Zariwala M.A."/>
            <person name="Ostrowski L.E."/>
        </authorList>
    </citation>
    <scope>FUNCTION</scope>
    <scope>SUBCELLULAR LOCATION</scope>
    <scope>TISSUE SPECIFICITY</scope>
    <scope>DISRUPTION PHENOTYPE</scope>
    <scope>CONDITIONAL KNOCKOUT IN TRACHEAL CELLS</scope>
</reference>
<comment type="function">
    <text evidence="2 6 8">Involved in the cross-linking of microtubules and microfilaments (By similarity). Regulates microtubule dynamics and stability by interacting with microtubule plus-end tracking proteins, such as MAPRE1, to regulate microtubule growth along actin stress fibers (By similarity). Enhances ADORA2-mediated adenylyl cyclase activation by acting as a scaffold to recruit trimeric G-protein complexes to ADORA2A (PubMed:23994616). Regulates ciliary orientation and performance in cells located in the airway (PubMed:30665704).</text>
</comment>
<comment type="subunit">
    <text evidence="6 7">Interacts with ADORA2A (via its cytoplasmic C-terminal domain) (PubMed:23994616). Interacts with GNAS, GNAL, GNAQ, and GNA13 (PubMed:23994616). Interacts with MAPRE1 (PubMed:24706950).</text>
</comment>
<comment type="subcellular location">
    <subcellularLocation>
        <location evidence="6">Cytoplasm</location>
        <location evidence="6">Cytoskeleton</location>
    </subcellularLocation>
    <subcellularLocation>
        <location evidence="6">Cell membrane</location>
    </subcellularLocation>
    <subcellularLocation>
        <location evidence="2">Cytoplasm</location>
        <location evidence="2">Cytoskeleton</location>
        <location evidence="2">Stress fiber</location>
    </subcellularLocation>
    <subcellularLocation>
        <location evidence="8">Cytoplasm</location>
        <location evidence="8">Cytoskeleton</location>
        <location evidence="8">Cilium basal body</location>
    </subcellularLocation>
    <text evidence="1 2">Colocalizes with ADORA2A at neuronal processes (By similarity). Colocalizes with and tracks the tips of microtubule plus ends (By similarity).</text>
</comment>
<comment type="tissue specificity">
    <text evidence="8">Expressed in tracheal epithelial cells (at protein level).</text>
</comment>
<comment type="disruption phenotype">
    <text evidence="8">Knockout mice exhibit a high rate of neonatal death (PubMed:30665704). Mice that survive show signs of hydrocephalus at postnatal days 14 and 21, along with mucus accumulation in multiple sinuses, and remodeling of the nasal cavity (PubMed:30665704). Conditional knockout in tracheal cells lead to isolated cases of hydrocephalus, as well as chronic rhinosinusitis and accumulation of mucus in the nasal cavity, which is caused by impaired mucociliary clearance (PubMed:30665704).</text>
</comment>
<comment type="similarity">
    <text evidence="9">Belongs to the GAS2 family.</text>
</comment>
<name>GA2L2_MOUSE</name>
<organism>
    <name type="scientific">Mus musculus</name>
    <name type="common">Mouse</name>
    <dbReference type="NCBI Taxonomy" id="10090"/>
    <lineage>
        <taxon>Eukaryota</taxon>
        <taxon>Metazoa</taxon>
        <taxon>Chordata</taxon>
        <taxon>Craniata</taxon>
        <taxon>Vertebrata</taxon>
        <taxon>Euteleostomi</taxon>
        <taxon>Mammalia</taxon>
        <taxon>Eutheria</taxon>
        <taxon>Euarchontoglires</taxon>
        <taxon>Glires</taxon>
        <taxon>Rodentia</taxon>
        <taxon>Myomorpha</taxon>
        <taxon>Muroidea</taxon>
        <taxon>Muridae</taxon>
        <taxon>Murinae</taxon>
        <taxon>Mus</taxon>
        <taxon>Mus</taxon>
    </lineage>
</organism>
<gene>
    <name type="primary">Gas2l2</name>
</gene>
<feature type="chain" id="PRO_0000190445" description="GAS2-like protein 2">
    <location>
        <begin position="1"/>
        <end position="860"/>
    </location>
</feature>
<feature type="domain" description="Calponin-homology (CH)" evidence="3">
    <location>
        <begin position="32"/>
        <end position="159"/>
    </location>
</feature>
<feature type="domain" description="GAR" evidence="4">
    <location>
        <begin position="201"/>
        <end position="273"/>
    </location>
</feature>
<feature type="region of interest" description="Disordered" evidence="5">
    <location>
        <begin position="1"/>
        <end position="22"/>
    </location>
</feature>
<feature type="region of interest" description="Disordered" evidence="5">
    <location>
        <begin position="281"/>
        <end position="459"/>
    </location>
</feature>
<feature type="region of interest" description="Interaction with ADORA2A and GNAS" evidence="6">
    <location>
        <begin position="431"/>
        <end position="860"/>
    </location>
</feature>
<feature type="region of interest" description="Disordered" evidence="5">
    <location>
        <begin position="473"/>
        <end position="574"/>
    </location>
</feature>
<feature type="region of interest" description="Disordered" evidence="5">
    <location>
        <begin position="697"/>
        <end position="743"/>
    </location>
</feature>
<feature type="region of interest" description="Disordered" evidence="5">
    <location>
        <begin position="758"/>
        <end position="781"/>
    </location>
</feature>
<feature type="region of interest" description="Disordered" evidence="5">
    <location>
        <begin position="801"/>
        <end position="860"/>
    </location>
</feature>
<feature type="compositionally biased region" description="Basic residues" evidence="5">
    <location>
        <begin position="1"/>
        <end position="12"/>
    </location>
</feature>
<feature type="compositionally biased region" description="Polar residues" evidence="5">
    <location>
        <begin position="301"/>
        <end position="316"/>
    </location>
</feature>
<feature type="compositionally biased region" description="Basic and acidic residues" evidence="5">
    <location>
        <begin position="347"/>
        <end position="364"/>
    </location>
</feature>
<feature type="compositionally biased region" description="Polar residues" evidence="5">
    <location>
        <begin position="365"/>
        <end position="393"/>
    </location>
</feature>
<feature type="compositionally biased region" description="Polar residues" evidence="5">
    <location>
        <begin position="473"/>
        <end position="485"/>
    </location>
</feature>
<feature type="compositionally biased region" description="Basic and acidic residues" evidence="5">
    <location>
        <begin position="530"/>
        <end position="549"/>
    </location>
</feature>
<feature type="compositionally biased region" description="Polar residues" evidence="5">
    <location>
        <begin position="724"/>
        <end position="733"/>
    </location>
</feature>
<feature type="compositionally biased region" description="Basic residues" evidence="5">
    <location>
        <begin position="758"/>
        <end position="768"/>
    </location>
</feature>
<feature type="compositionally biased region" description="Polar residues" evidence="5">
    <location>
        <begin position="828"/>
        <end position="840"/>
    </location>
</feature>
<dbReference type="EMBL" id="AL663096">
    <property type="status" value="NOT_ANNOTATED_CDS"/>
    <property type="molecule type" value="Genomic_DNA"/>
</dbReference>
<dbReference type="EMBL" id="BC147480">
    <property type="protein sequence ID" value="AAI47481.1"/>
    <property type="molecule type" value="mRNA"/>
</dbReference>
<dbReference type="EMBL" id="BC150847">
    <property type="protein sequence ID" value="AAI50848.1"/>
    <property type="molecule type" value="mRNA"/>
</dbReference>
<dbReference type="CCDS" id="CCDS25164.1"/>
<dbReference type="RefSeq" id="NP_001013781.1">
    <property type="nucleotide sequence ID" value="NM_001013759.2"/>
</dbReference>
<dbReference type="SMR" id="Q5SSG4"/>
<dbReference type="FunCoup" id="Q5SSG4">
    <property type="interactions" value="30"/>
</dbReference>
<dbReference type="STRING" id="10090.ENSMUSP00000051907"/>
<dbReference type="GlyGen" id="Q5SSG4">
    <property type="glycosylation" value="2 sites"/>
</dbReference>
<dbReference type="iPTMnet" id="Q5SSG4"/>
<dbReference type="PhosphoSitePlus" id="Q5SSG4"/>
<dbReference type="PaxDb" id="10090-ENSMUSP00000051907"/>
<dbReference type="ProteomicsDB" id="265724"/>
<dbReference type="Antibodypedia" id="73370">
    <property type="antibodies" value="69 antibodies from 16 providers"/>
</dbReference>
<dbReference type="DNASU" id="237891"/>
<dbReference type="Ensembl" id="ENSMUST00000052521.9">
    <property type="protein sequence ID" value="ENSMUSP00000051907.3"/>
    <property type="gene ID" value="ENSMUSG00000020686.13"/>
</dbReference>
<dbReference type="GeneID" id="237891"/>
<dbReference type="KEGG" id="mmu:237891"/>
<dbReference type="UCSC" id="uc007koy.2">
    <property type="organism name" value="mouse"/>
</dbReference>
<dbReference type="AGR" id="MGI:3652048"/>
<dbReference type="CTD" id="246176"/>
<dbReference type="MGI" id="MGI:3652048">
    <property type="gene designation" value="Gas2l2"/>
</dbReference>
<dbReference type="VEuPathDB" id="HostDB:ENSMUSG00000020686"/>
<dbReference type="eggNOG" id="KOG0516">
    <property type="taxonomic scope" value="Eukaryota"/>
</dbReference>
<dbReference type="GeneTree" id="ENSGT00940000162866"/>
<dbReference type="HOGENOM" id="CLU_015447_1_0_1"/>
<dbReference type="InParanoid" id="Q5SSG4"/>
<dbReference type="OMA" id="HPAGLHY"/>
<dbReference type="OrthoDB" id="206130at2759"/>
<dbReference type="PhylomeDB" id="Q5SSG4"/>
<dbReference type="TreeFam" id="TF323754"/>
<dbReference type="BioGRID-ORCS" id="237891">
    <property type="hits" value="4 hits in 77 CRISPR screens"/>
</dbReference>
<dbReference type="PRO" id="PR:Q5SSG4"/>
<dbReference type="Proteomes" id="UP000000589">
    <property type="component" value="Chromosome 11"/>
</dbReference>
<dbReference type="RNAct" id="Q5SSG4">
    <property type="molecule type" value="protein"/>
</dbReference>
<dbReference type="Bgee" id="ENSMUSG00000020686">
    <property type="expression patterns" value="Expressed in mesodermal cell in embryo and 12 other cell types or tissues"/>
</dbReference>
<dbReference type="ExpressionAtlas" id="Q5SSG4">
    <property type="expression patterns" value="baseline and differential"/>
</dbReference>
<dbReference type="GO" id="GO:0005884">
    <property type="term" value="C:actin filament"/>
    <property type="evidence" value="ECO:0007669"/>
    <property type="project" value="Ensembl"/>
</dbReference>
<dbReference type="GO" id="GO:0036064">
    <property type="term" value="C:ciliary basal body"/>
    <property type="evidence" value="ECO:0007669"/>
    <property type="project" value="Ensembl"/>
</dbReference>
<dbReference type="GO" id="GO:0005737">
    <property type="term" value="C:cytoplasm"/>
    <property type="evidence" value="ECO:0000250"/>
    <property type="project" value="UniProtKB"/>
</dbReference>
<dbReference type="GO" id="GO:0035371">
    <property type="term" value="C:microtubule plus-end"/>
    <property type="evidence" value="ECO:0007669"/>
    <property type="project" value="Ensembl"/>
</dbReference>
<dbReference type="GO" id="GO:0005886">
    <property type="term" value="C:plasma membrane"/>
    <property type="evidence" value="ECO:0007669"/>
    <property type="project" value="UniProtKB-SubCell"/>
</dbReference>
<dbReference type="GO" id="GO:0001725">
    <property type="term" value="C:stress fiber"/>
    <property type="evidence" value="ECO:0007669"/>
    <property type="project" value="UniProtKB-SubCell"/>
</dbReference>
<dbReference type="GO" id="GO:0051015">
    <property type="term" value="F:actin filament binding"/>
    <property type="evidence" value="ECO:0000250"/>
    <property type="project" value="UniProtKB"/>
</dbReference>
<dbReference type="GO" id="GO:0008093">
    <property type="term" value="F:cytoskeletal anchor activity"/>
    <property type="evidence" value="ECO:0000250"/>
    <property type="project" value="UniProtKB"/>
</dbReference>
<dbReference type="GO" id="GO:0001965">
    <property type="term" value="F:G-protein alpha-subunit binding"/>
    <property type="evidence" value="ECO:0000353"/>
    <property type="project" value="UniProtKB"/>
</dbReference>
<dbReference type="GO" id="GO:0008017">
    <property type="term" value="F:microtubule binding"/>
    <property type="evidence" value="ECO:0000250"/>
    <property type="project" value="UniProtKB"/>
</dbReference>
<dbReference type="GO" id="GO:0001578">
    <property type="term" value="P:microtubule bundle formation"/>
    <property type="evidence" value="ECO:0000250"/>
    <property type="project" value="UniProtKB"/>
</dbReference>
<dbReference type="GO" id="GO:0007026">
    <property type="term" value="P:negative regulation of microtubule depolymerization"/>
    <property type="evidence" value="ECO:0000250"/>
    <property type="project" value="UniProtKB"/>
</dbReference>
<dbReference type="GO" id="GO:0045745">
    <property type="term" value="P:positive regulation of G protein-coupled receptor signaling pathway"/>
    <property type="evidence" value="ECO:0000314"/>
    <property type="project" value="UniProtKB"/>
</dbReference>
<dbReference type="GO" id="GO:1904825">
    <property type="term" value="P:protein localization to microtubule plus-end"/>
    <property type="evidence" value="ECO:0007669"/>
    <property type="project" value="Ensembl"/>
</dbReference>
<dbReference type="GO" id="GO:0060296">
    <property type="term" value="P:regulation of cilium beat frequency involved in ciliary motility"/>
    <property type="evidence" value="ECO:0000315"/>
    <property type="project" value="UniProtKB"/>
</dbReference>
<dbReference type="CDD" id="cd21268">
    <property type="entry name" value="CH_GAS2L1_2"/>
    <property type="match status" value="1"/>
</dbReference>
<dbReference type="FunFam" id="3.30.920.20:FF:000004">
    <property type="entry name" value="GAS2-like protein 1 isoform X1"/>
    <property type="match status" value="1"/>
</dbReference>
<dbReference type="FunFam" id="1.10.418.10:FF:000047">
    <property type="entry name" value="Growth arrest specific 2 like 1"/>
    <property type="match status" value="1"/>
</dbReference>
<dbReference type="Gene3D" id="1.10.418.10">
    <property type="entry name" value="Calponin-like domain"/>
    <property type="match status" value="1"/>
</dbReference>
<dbReference type="Gene3D" id="3.30.920.20">
    <property type="entry name" value="Gas2-like domain"/>
    <property type="match status" value="1"/>
</dbReference>
<dbReference type="InterPro" id="IPR001715">
    <property type="entry name" value="CH_dom"/>
</dbReference>
<dbReference type="InterPro" id="IPR036872">
    <property type="entry name" value="CH_dom_sf"/>
</dbReference>
<dbReference type="InterPro" id="IPR003108">
    <property type="entry name" value="GAR_dom"/>
</dbReference>
<dbReference type="InterPro" id="IPR036534">
    <property type="entry name" value="GAR_dom_sf"/>
</dbReference>
<dbReference type="PANTHER" id="PTHR46756:SF14">
    <property type="entry name" value="GAS2-LIKE PROTEIN 2"/>
    <property type="match status" value="1"/>
</dbReference>
<dbReference type="PANTHER" id="PTHR46756">
    <property type="entry name" value="TRANSGELIN"/>
    <property type="match status" value="1"/>
</dbReference>
<dbReference type="Pfam" id="PF00307">
    <property type="entry name" value="CH"/>
    <property type="match status" value="1"/>
</dbReference>
<dbReference type="Pfam" id="PF02187">
    <property type="entry name" value="GAS2"/>
    <property type="match status" value="1"/>
</dbReference>
<dbReference type="SMART" id="SM00033">
    <property type="entry name" value="CH"/>
    <property type="match status" value="1"/>
</dbReference>
<dbReference type="SMART" id="SM00243">
    <property type="entry name" value="GAS2"/>
    <property type="match status" value="1"/>
</dbReference>
<dbReference type="SUPFAM" id="SSF47576">
    <property type="entry name" value="Calponin-homology domain, CH-domain"/>
    <property type="match status" value="1"/>
</dbReference>
<dbReference type="SUPFAM" id="SSF143575">
    <property type="entry name" value="GAS2 domain-like"/>
    <property type="match status" value="1"/>
</dbReference>
<dbReference type="PROSITE" id="PS50021">
    <property type="entry name" value="CH"/>
    <property type="match status" value="1"/>
</dbReference>
<dbReference type="PROSITE" id="PS51460">
    <property type="entry name" value="GAR"/>
    <property type="match status" value="1"/>
</dbReference>
<sequence>MSQHVGHGRRPRTPGPPVRSIRPFKSSEQYLEAMKEDLAEWLRDLYGLDIDADNFLRVLETGLVLCRHANTVTEAALAFLAEAPERAQKIPMPQAGVFCNGAAQPGTFQARDNISNFIQWCRKEMGIQEVLMFETEDLVLRKNVKSVVLCLLELGRRAWRFGVAAPALVHLEEEIDEELRRDLALPSPDPPPPIPPARRPCHFHNLDQMVQSLVSHCTCPVQFSMVKISEGKYRVGDSNTLIFIRILRSHVMVRVGGGWDTLGHYLDKHDPCRCTSLSHKPGSFLKPPGPPVQHEVKVQDGPSQPQPTMTISRSQSPLPPVDWKTYTSSSRKLRPPTPSSPGLRSEPPVRARTLREDPLPRSQEKPTPSQRMSSPGPQFSSTCRGPDLQSTLSGKRANRCPGEPPRGRTPTLWVHKEAGSRGTHTKAPTPQRLQIPEATSKRTSARGPSPPPRSSSLASPHMIWVLHQGASPQLSEPMTVHSSSPGKGLTKIPIRLSPARPPTPGRSSLGTEGEYSTGRGSISSRALEGNLDRSTHGHHSVEASGDHQTDIQTTSETEDPRSLGTQKWKERHTSLALGRRREQALYDNLKEEVVANMKLLEVGTAYTQGTRSQAIPRSGVYVPSLGGRWPEPGGPYDKVIRELVQGPPPLLKVDLKAWKVGSECLPRPIVDPGSPKEKLGSRETGTRIKASLNAEDTTVRTVSPARGQGCSTPPVSANLEAPTRSCSDPSSDKASVCLGKGKRTLRKPQKIPSIYKLKLRPRIRPRRDHRPEKRPSRIPKPLPYSCLVLARTAPGSRLLKATLGGKGGVPCQVNGTGKKEEEKKKGGSNISLESSIQPAESQEPLKLGGTPLSPEEESWV</sequence>
<protein>
    <recommendedName>
        <fullName>GAS2-like protein 2</fullName>
    </recommendedName>
    <alternativeName>
        <fullName>Growth arrest-specific protein 2-like 2</fullName>
    </alternativeName>
</protein>
<accession>Q5SSG4</accession>
<accession>B9EJR3</accession>